<dbReference type="EMBL" id="S83518">
    <property type="protein sequence ID" value="AAB50917.1"/>
    <property type="molecule type" value="mRNA"/>
</dbReference>
<dbReference type="EMBL" id="BC070708">
    <property type="protein sequence ID" value="AAH70708.1"/>
    <property type="molecule type" value="mRNA"/>
</dbReference>
<dbReference type="SMR" id="O13161"/>
<dbReference type="BioGRID" id="99325">
    <property type="interactions" value="1"/>
</dbReference>
<dbReference type="IntAct" id="O13161">
    <property type="interactions" value="1"/>
</dbReference>
<dbReference type="DNASU" id="397990"/>
<dbReference type="GeneID" id="397990"/>
<dbReference type="KEGG" id="xla:397990"/>
<dbReference type="AGR" id="Xenbase:XB-GENE-1033836"/>
<dbReference type="CTD" id="397990"/>
<dbReference type="Xenbase" id="XB-GENE-1033836">
    <property type="gene designation" value="vegt.S"/>
</dbReference>
<dbReference type="OMA" id="AFSTEYN"/>
<dbReference type="OrthoDB" id="7442607at2759"/>
<dbReference type="Proteomes" id="UP000186698">
    <property type="component" value="Chromosome 1S"/>
</dbReference>
<dbReference type="Bgee" id="397990">
    <property type="expression patterns" value="Expressed in gastrula and 10 other cell types or tissues"/>
</dbReference>
<dbReference type="GO" id="GO:0000785">
    <property type="term" value="C:chromatin"/>
    <property type="evidence" value="ECO:0000318"/>
    <property type="project" value="GO_Central"/>
</dbReference>
<dbReference type="GO" id="GO:0005634">
    <property type="term" value="C:nucleus"/>
    <property type="evidence" value="ECO:0000318"/>
    <property type="project" value="GO_Central"/>
</dbReference>
<dbReference type="GO" id="GO:0000981">
    <property type="term" value="F:DNA-binding transcription factor activity, RNA polymerase II-specific"/>
    <property type="evidence" value="ECO:0000318"/>
    <property type="project" value="GO_Central"/>
</dbReference>
<dbReference type="GO" id="GO:0000978">
    <property type="term" value="F:RNA polymerase II cis-regulatory region sequence-specific DNA binding"/>
    <property type="evidence" value="ECO:0000318"/>
    <property type="project" value="GO_Central"/>
</dbReference>
<dbReference type="GO" id="GO:0001708">
    <property type="term" value="P:cell fate specification"/>
    <property type="evidence" value="ECO:0000318"/>
    <property type="project" value="GO_Central"/>
</dbReference>
<dbReference type="GO" id="GO:0045893">
    <property type="term" value="P:positive regulation of DNA-templated transcription"/>
    <property type="evidence" value="ECO:0007669"/>
    <property type="project" value="InterPro"/>
</dbReference>
<dbReference type="GO" id="GO:0006357">
    <property type="term" value="P:regulation of transcription by RNA polymerase II"/>
    <property type="evidence" value="ECO:0000318"/>
    <property type="project" value="GO_Central"/>
</dbReference>
<dbReference type="CDD" id="cd20197">
    <property type="entry name" value="T-box_VegT-like"/>
    <property type="match status" value="1"/>
</dbReference>
<dbReference type="FunFam" id="2.60.40.820:FF:000007">
    <property type="entry name" value="T-box transcription factor"/>
    <property type="match status" value="1"/>
</dbReference>
<dbReference type="Gene3D" id="2.60.40.820">
    <property type="entry name" value="Transcription factor, T-box"/>
    <property type="match status" value="1"/>
</dbReference>
<dbReference type="InterPro" id="IPR008967">
    <property type="entry name" value="p53-like_TF_DNA-bd_sf"/>
</dbReference>
<dbReference type="InterPro" id="IPR046360">
    <property type="entry name" value="T-box_DNA-bd"/>
</dbReference>
<dbReference type="InterPro" id="IPR036960">
    <property type="entry name" value="T-box_sf"/>
</dbReference>
<dbReference type="InterPro" id="IPR001699">
    <property type="entry name" value="TF_T-box"/>
</dbReference>
<dbReference type="InterPro" id="IPR018186">
    <property type="entry name" value="TF_T-box_CS"/>
</dbReference>
<dbReference type="PANTHER" id="PTHR11267:SF200">
    <property type="entry name" value="MGA, MAX DIMERIZATION PROTEIN"/>
    <property type="match status" value="1"/>
</dbReference>
<dbReference type="PANTHER" id="PTHR11267">
    <property type="entry name" value="T-BOX PROTEIN-RELATED"/>
    <property type="match status" value="1"/>
</dbReference>
<dbReference type="Pfam" id="PF00907">
    <property type="entry name" value="T-box"/>
    <property type="match status" value="1"/>
</dbReference>
<dbReference type="PRINTS" id="PR00937">
    <property type="entry name" value="TBOX"/>
</dbReference>
<dbReference type="SMART" id="SM00425">
    <property type="entry name" value="TBOX"/>
    <property type="match status" value="1"/>
</dbReference>
<dbReference type="SUPFAM" id="SSF49417">
    <property type="entry name" value="p53-like transcription factors"/>
    <property type="match status" value="1"/>
</dbReference>
<dbReference type="PROSITE" id="PS01283">
    <property type="entry name" value="TBOX_1"/>
    <property type="match status" value="1"/>
</dbReference>
<dbReference type="PROSITE" id="PS01264">
    <property type="entry name" value="TBOX_2"/>
    <property type="match status" value="1"/>
</dbReference>
<dbReference type="PROSITE" id="PS50252">
    <property type="entry name" value="TBOX_3"/>
    <property type="match status" value="1"/>
</dbReference>
<accession>O13161</accession>
<keyword id="KW-0217">Developmental protein</keyword>
<keyword id="KW-0238">DNA-binding</keyword>
<keyword id="KW-0539">Nucleus</keyword>
<keyword id="KW-1185">Reference proteome</keyword>
<keyword id="KW-0804">Transcription</keyword>
<keyword id="KW-0805">Transcription regulation</keyword>
<comment type="function">
    <text evidence="1 4 5">Transcription factor required for both mesoderm and endoderm formation in the embryo; signaling determinants and concentration levels may determine which germ layer is formed. Acts together with beta-catenin to activate genes that are responsible for mesoderm induction including wnt-8, eomes t/bra, siamois, mix1 and sox17. Directly binds to promoter DNA. Patterns the mesoderm along the dorsoventral and posterior axis. Activates siamois gene transcription when alone or in combination with beta-catenin, but inhibits siamois transcription in combination with pou5f1.1/oct-25.</text>
</comment>
<comment type="subunit">
    <text evidence="1">Forms a repression complex on the promoters of the nodal/nr1 and siamois genes with the maternal factors tcf7l1/tcf3 and pouf5.1/oct-25. Interacts (via C-terminus) with tcf7l1/tcf3 (via N-terminus). Also interacts with the other POU-domain transcription factors pou5f1.2/oct-91 and pou5f1.3/oct-60 (By similarity).</text>
</comment>
<comment type="subcellular location">
    <subcellularLocation>
        <location evidence="1 2">Nucleus</location>
    </subcellularLocation>
</comment>
<comment type="tissue specificity">
    <text evidence="5">Maternally localized to the vegetal hemisphere of oocytes. Zygotic expression parallels blastopore formation and shifts from dorsal expression in the marginal zone of late blastula and early gastrula stages to a ventral/lateral expression at later stages. During neurula and tailbud stages, expressed in the posterior and anterior ends of the embryo. During tailbud stages, expressed in a subset of interneurons in the neural tube.</text>
</comment>
<comment type="developmental stage">
    <text evidence="5">Expressed both maternally and zygotically. Expression declines considerably at the end of gastrulation but continues at a low level until the tadpole stage (stage 38).</text>
</comment>
<comment type="induction">
    <text evidence="5">By mesoderm-inducers including t/bra, and both FGF and TGF-beta family members. FGF signaling is not required for initial expression in the dorsal marginal zone, but is required for its continued expression during mid to late gastrula stages.</text>
</comment>
<evidence type="ECO:0000250" key="1">
    <source>
        <dbReference type="UniProtKB" id="P87377"/>
    </source>
</evidence>
<evidence type="ECO:0000255" key="2">
    <source>
        <dbReference type="PROSITE-ProRule" id="PRU00201"/>
    </source>
</evidence>
<evidence type="ECO:0000256" key="3">
    <source>
        <dbReference type="SAM" id="MobiDB-lite"/>
    </source>
</evidence>
<evidence type="ECO:0000269" key="4">
    <source>
    </source>
</evidence>
<evidence type="ECO:0000269" key="5">
    <source>
    </source>
</evidence>
<evidence type="ECO:0000303" key="6">
    <source>
    </source>
</evidence>
<evidence type="ECO:0000305" key="7"/>
<evidence type="ECO:0000312" key="8">
    <source>
        <dbReference type="EMBL" id="AAB50917.1"/>
    </source>
</evidence>
<evidence type="ECO:0000312" key="9">
    <source>
        <dbReference type="EMBL" id="AAH70708.1"/>
    </source>
</evidence>
<gene>
    <name type="primary">vegt-b</name>
    <name type="synonym">vegt</name>
</gene>
<organism>
    <name type="scientific">Xenopus laevis</name>
    <name type="common">African clawed frog</name>
    <dbReference type="NCBI Taxonomy" id="8355"/>
    <lineage>
        <taxon>Eukaryota</taxon>
        <taxon>Metazoa</taxon>
        <taxon>Chordata</taxon>
        <taxon>Craniata</taxon>
        <taxon>Vertebrata</taxon>
        <taxon>Euteleostomi</taxon>
        <taxon>Amphibia</taxon>
        <taxon>Batrachia</taxon>
        <taxon>Anura</taxon>
        <taxon>Pipoidea</taxon>
        <taxon>Pipidae</taxon>
        <taxon>Xenopodinae</taxon>
        <taxon>Xenopus</taxon>
        <taxon>Xenopus</taxon>
    </lineage>
</organism>
<sequence length="455" mass="51963">MRNCCRERGFSVGRLEPETSFSCASDVKSSPDMDSVSSQDSLYLPNSIGASLEDQNLWTQFHQEGTEMIITKSGRRMFPQCKIRLFGLHPYTKYMLLVDFVPLDNFRYKWNKNQWEAAGKAEPHPPCRTYVHPDSPASGAHWMKDPICFQKLKLTNNTLDQQGHIILHSMHRYKPRFHVVQSDDMYNSPWGLVQVFSFPETEFTAVTAYQNEKITKLKINHNPFAKGFREQERSHKRDDVLKTLQQSPSKSQKRKKWEDSPEADISDFPKATRIKEESIMDPAGVYQNWVSDHEANQGLTPHSPESEGVNQEQQVPTSSSNFYIKSQYRRSSQHLSSPYDLGEPSSRRLTPDVATVPDSDPDSLAVLHVIPTQNSAQERTCSMNFSMETPMKQPLRGAIYSPYGTEQWMVPAQGPYQPVSYTAYPTDLSAQGAVAHPHSGMSDWSQYSLFPYSCW</sequence>
<protein>
    <recommendedName>
        <fullName>T-box protein VegT-B</fullName>
    </recommendedName>
    <alternativeName>
        <fullName evidence="6">Xenopus optomotor blind</fullName>
        <shortName evidence="9">Xombi</shortName>
    </alternativeName>
</protein>
<feature type="chain" id="PRO_0000390488" description="T-box protein VegT-B">
    <location>
        <begin position="1"/>
        <end position="455"/>
    </location>
</feature>
<feature type="DNA-binding region" description="T-box" evidence="2">
    <location>
        <begin position="57"/>
        <end position="230"/>
    </location>
</feature>
<feature type="region of interest" description="Disordered" evidence="3">
    <location>
        <begin position="229"/>
        <end position="276"/>
    </location>
</feature>
<feature type="region of interest" description="Disordered" evidence="3">
    <location>
        <begin position="295"/>
        <end position="350"/>
    </location>
</feature>
<feature type="compositionally biased region" description="Basic and acidic residues" evidence="3">
    <location>
        <begin position="229"/>
        <end position="241"/>
    </location>
</feature>
<feature type="compositionally biased region" description="Polar residues" evidence="3">
    <location>
        <begin position="308"/>
        <end position="326"/>
    </location>
</feature>
<proteinExistence type="evidence at transcript level"/>
<name>VEGTB_XENLA</name>
<reference evidence="7 8" key="1">
    <citation type="journal article" date="1996" name="Development">
        <title>Expression cloning of a Xenopus T-related gene (Xombi) involved in mesodermal patterning and blastopore lip formation.</title>
        <authorList>
            <person name="Lustig K.D."/>
            <person name="Kroll K.L."/>
            <person name="Sun E.E."/>
            <person name="Kirschner M.W."/>
        </authorList>
    </citation>
    <scope>NUCLEOTIDE SEQUENCE [MRNA]</scope>
    <scope>FUNCTION</scope>
    <scope>TISSUE SPECIFICITY</scope>
    <scope>DEVELOPMENTAL STAGE</scope>
    <scope>INDUCTION</scope>
</reference>
<reference evidence="9" key="2">
    <citation type="submission" date="2004-05" db="EMBL/GenBank/DDBJ databases">
        <authorList>
            <consortium name="NIH - Xenopus Gene Collection (XGC) project"/>
        </authorList>
    </citation>
    <scope>NUCLEOTIDE SEQUENCE [LARGE SCALE MRNA]</scope>
    <source>
        <tissue evidence="9">Oocyte</tissue>
    </source>
</reference>
<reference evidence="7" key="3">
    <citation type="journal article" date="2000" name="Dev. Dyn.">
        <title>Evidence for dual mechanisms of mesoderm establishment in Xenopus embryos.</title>
        <authorList>
            <person name="Kavka A.I."/>
            <person name="Green J.B."/>
        </authorList>
    </citation>
    <scope>FUNCTION</scope>
</reference>